<gene>
    <name evidence="1" type="primary">clsA</name>
    <name type="synonym">cls</name>
    <name type="ordered locus">SPAB_01504</name>
</gene>
<organism>
    <name type="scientific">Salmonella paratyphi B (strain ATCC BAA-1250 / SPB7)</name>
    <dbReference type="NCBI Taxonomy" id="1016998"/>
    <lineage>
        <taxon>Bacteria</taxon>
        <taxon>Pseudomonadati</taxon>
        <taxon>Pseudomonadota</taxon>
        <taxon>Gammaproteobacteria</taxon>
        <taxon>Enterobacterales</taxon>
        <taxon>Enterobacteriaceae</taxon>
        <taxon>Salmonella</taxon>
    </lineage>
</organism>
<keyword id="KW-0997">Cell inner membrane</keyword>
<keyword id="KW-1003">Cell membrane</keyword>
<keyword id="KW-0444">Lipid biosynthesis</keyword>
<keyword id="KW-0443">Lipid metabolism</keyword>
<keyword id="KW-0472">Membrane</keyword>
<keyword id="KW-0594">Phospholipid biosynthesis</keyword>
<keyword id="KW-1208">Phospholipid metabolism</keyword>
<keyword id="KW-0677">Repeat</keyword>
<keyword id="KW-0808">Transferase</keyword>
<keyword id="KW-0812">Transmembrane</keyword>
<keyword id="KW-1133">Transmembrane helix</keyword>
<dbReference type="EC" id="2.7.8.-" evidence="1"/>
<dbReference type="EMBL" id="CP000886">
    <property type="protein sequence ID" value="ABX66902.1"/>
    <property type="molecule type" value="Genomic_DNA"/>
</dbReference>
<dbReference type="RefSeq" id="WP_000206886.1">
    <property type="nucleotide sequence ID" value="NC_010102.1"/>
</dbReference>
<dbReference type="SMR" id="A9MWP9"/>
<dbReference type="KEGG" id="spq:SPAB_01504"/>
<dbReference type="PATRIC" id="fig|1016998.12.peg.1412"/>
<dbReference type="HOGENOM" id="CLU_038053_1_0_6"/>
<dbReference type="BioCyc" id="SENT1016998:SPAB_RS06115-MONOMER"/>
<dbReference type="Proteomes" id="UP000008556">
    <property type="component" value="Chromosome"/>
</dbReference>
<dbReference type="GO" id="GO:0005886">
    <property type="term" value="C:plasma membrane"/>
    <property type="evidence" value="ECO:0007669"/>
    <property type="project" value="UniProtKB-SubCell"/>
</dbReference>
<dbReference type="GO" id="GO:0008808">
    <property type="term" value="F:cardiolipin synthase activity"/>
    <property type="evidence" value="ECO:0007669"/>
    <property type="project" value="InterPro"/>
</dbReference>
<dbReference type="GO" id="GO:0032049">
    <property type="term" value="P:cardiolipin biosynthetic process"/>
    <property type="evidence" value="ECO:0007669"/>
    <property type="project" value="InterPro"/>
</dbReference>
<dbReference type="CDD" id="cd09152">
    <property type="entry name" value="PLDc_EcCLS_like_1"/>
    <property type="match status" value="1"/>
</dbReference>
<dbReference type="CDD" id="cd09158">
    <property type="entry name" value="PLDc_EcCLS_like_2"/>
    <property type="match status" value="1"/>
</dbReference>
<dbReference type="FunFam" id="3.30.870.10:FF:000002">
    <property type="entry name" value="Cardiolipin synthase A"/>
    <property type="match status" value="1"/>
</dbReference>
<dbReference type="FunFam" id="3.30.870.10:FF:000003">
    <property type="entry name" value="Cardiolipin synthase A"/>
    <property type="match status" value="1"/>
</dbReference>
<dbReference type="Gene3D" id="3.30.870.10">
    <property type="entry name" value="Endonuclease Chain A"/>
    <property type="match status" value="2"/>
</dbReference>
<dbReference type="HAMAP" id="MF_00190">
    <property type="entry name" value="Cardiolipin_synth_ClsA"/>
    <property type="match status" value="1"/>
</dbReference>
<dbReference type="InterPro" id="IPR022924">
    <property type="entry name" value="Cardiolipin_synthase"/>
</dbReference>
<dbReference type="InterPro" id="IPR030840">
    <property type="entry name" value="CL_synthase_A"/>
</dbReference>
<dbReference type="InterPro" id="IPR027379">
    <property type="entry name" value="CLS_N"/>
</dbReference>
<dbReference type="InterPro" id="IPR025202">
    <property type="entry name" value="PLD-like_dom"/>
</dbReference>
<dbReference type="InterPro" id="IPR001736">
    <property type="entry name" value="PLipase_D/transphosphatidylase"/>
</dbReference>
<dbReference type="NCBIfam" id="TIGR04265">
    <property type="entry name" value="bac_cardiolipin"/>
    <property type="match status" value="1"/>
</dbReference>
<dbReference type="PANTHER" id="PTHR21248">
    <property type="entry name" value="CARDIOLIPIN SYNTHASE"/>
    <property type="match status" value="1"/>
</dbReference>
<dbReference type="PANTHER" id="PTHR21248:SF22">
    <property type="entry name" value="PHOSPHOLIPASE D"/>
    <property type="match status" value="1"/>
</dbReference>
<dbReference type="Pfam" id="PF13091">
    <property type="entry name" value="PLDc_2"/>
    <property type="match status" value="2"/>
</dbReference>
<dbReference type="Pfam" id="PF13396">
    <property type="entry name" value="PLDc_N"/>
    <property type="match status" value="1"/>
</dbReference>
<dbReference type="SMART" id="SM00155">
    <property type="entry name" value="PLDc"/>
    <property type="match status" value="2"/>
</dbReference>
<dbReference type="SUPFAM" id="SSF56024">
    <property type="entry name" value="Phospholipase D/nuclease"/>
    <property type="match status" value="2"/>
</dbReference>
<dbReference type="PROSITE" id="PS50035">
    <property type="entry name" value="PLD"/>
    <property type="match status" value="2"/>
</dbReference>
<evidence type="ECO:0000255" key="1">
    <source>
        <dbReference type="HAMAP-Rule" id="MF_00190"/>
    </source>
</evidence>
<comment type="function">
    <text evidence="1">Catalyzes the reversible phosphatidyl group transfer from one phosphatidylglycerol molecule to another to form cardiolipin (CL) (diphosphatidylglycerol) and glycerol.</text>
</comment>
<comment type="catalytic activity">
    <reaction evidence="1">
        <text>2 a 1,2-diacyl-sn-glycero-3-phospho-(1'-sn-glycerol) = a cardiolipin + glycerol</text>
        <dbReference type="Rhea" id="RHEA:31451"/>
        <dbReference type="ChEBI" id="CHEBI:17754"/>
        <dbReference type="ChEBI" id="CHEBI:62237"/>
        <dbReference type="ChEBI" id="CHEBI:64716"/>
    </reaction>
</comment>
<comment type="subcellular location">
    <subcellularLocation>
        <location evidence="1">Cell inner membrane</location>
        <topology evidence="1">Multi-pass membrane protein</topology>
    </subcellularLocation>
</comment>
<comment type="similarity">
    <text evidence="1">Belongs to the phospholipase D family. Cardiolipin synthase subfamily. ClsA sub-subfamily.</text>
</comment>
<reference key="1">
    <citation type="submission" date="2007-11" db="EMBL/GenBank/DDBJ databases">
        <authorList>
            <consortium name="The Salmonella enterica serovar Paratyphi B Genome Sequencing Project"/>
            <person name="McClelland M."/>
            <person name="Sanderson E.K."/>
            <person name="Porwollik S."/>
            <person name="Spieth J."/>
            <person name="Clifton W.S."/>
            <person name="Fulton R."/>
            <person name="Cordes M."/>
            <person name="Wollam A."/>
            <person name="Shah N."/>
            <person name="Pepin K."/>
            <person name="Bhonagiri V."/>
            <person name="Nash W."/>
            <person name="Johnson M."/>
            <person name="Thiruvilangam P."/>
            <person name="Wilson R."/>
        </authorList>
    </citation>
    <scope>NUCLEOTIDE SEQUENCE [LARGE SCALE GENOMIC DNA]</scope>
    <source>
        <strain>ATCC BAA-1250 / SPB7</strain>
    </source>
</reference>
<sequence>MTTFYTVVSWLVILGYWVLIAGVTLRILMKRRAVPSAMAWLLIIYILPLVGIIAYLSVGELHLGKRRAERARAMWPSTAKWLNDLKACKHIFAQENSSVASSLFKLCERRQGIAGVKGNQLQLLTDSDDVMQALIRDIQLARHNIEMVFYIWQPGGMADQVAESLMAAARRGIHCRLMLDSAGSVAFFRSPWAAMMRNAGIEVVEALKVNLMRVFLRRMDLRQHRKMVMIDNYIAYTGSMNMVDPRFFKQDAGVGQWVDLMARMEGPVATAMGIVYSCDWEIETGKRILPPPPDVNIMPFEQASGHTIHTIASGPGFPEDLIHQALLTATYAAREYLIMTTPYFVPSDDLLHAICTAAQRGVDVSIILPRKNDSLLVGWASRAFFSELLAAGVKIYQFEGGLLHTKSVLVDGELSLVGTVNLDMRSLWLNFEITLVIDDTGFGADLAAVQDDYISRSRLLDARLWVKRPLWQRITERLFYFFSPLL</sequence>
<name>CLSA_SALPB</name>
<accession>A9MWP9</accession>
<protein>
    <recommendedName>
        <fullName evidence="1">Cardiolipin synthase A</fullName>
        <shortName evidence="1">CL synthase</shortName>
        <ecNumber evidence="1">2.7.8.-</ecNumber>
    </recommendedName>
</protein>
<feature type="chain" id="PRO_1000077506" description="Cardiolipin synthase A">
    <location>
        <begin position="1"/>
        <end position="486"/>
    </location>
</feature>
<feature type="transmembrane region" description="Helical" evidence="1">
    <location>
        <begin position="3"/>
        <end position="23"/>
    </location>
</feature>
<feature type="transmembrane region" description="Helical" evidence="1">
    <location>
        <begin position="38"/>
        <end position="58"/>
    </location>
</feature>
<feature type="domain" description="PLD phosphodiesterase 1" evidence="1">
    <location>
        <begin position="219"/>
        <end position="246"/>
    </location>
</feature>
<feature type="domain" description="PLD phosphodiesterase 2" evidence="1">
    <location>
        <begin position="399"/>
        <end position="426"/>
    </location>
</feature>
<feature type="active site" evidence="1">
    <location>
        <position position="224"/>
    </location>
</feature>
<feature type="active site" evidence="1">
    <location>
        <position position="226"/>
    </location>
</feature>
<feature type="active site" evidence="1">
    <location>
        <position position="231"/>
    </location>
</feature>
<feature type="active site" evidence="1">
    <location>
        <position position="404"/>
    </location>
</feature>
<feature type="active site" evidence="1">
    <location>
        <position position="406"/>
    </location>
</feature>
<feature type="active site" evidence="1">
    <location>
        <position position="411"/>
    </location>
</feature>
<proteinExistence type="inferred from homology"/>